<accession>Q8FCE8</accession>
<gene>
    <name type="primary">ysaB</name>
    <name type="ordered locus">c4380</name>
</gene>
<keyword id="KW-1003">Cell membrane</keyword>
<keyword id="KW-0449">Lipoprotein</keyword>
<keyword id="KW-0472">Membrane</keyword>
<keyword id="KW-0564">Palmitate</keyword>
<keyword id="KW-1185">Reference proteome</keyword>
<keyword id="KW-0732">Signal</keyword>
<feature type="signal peptide" evidence="1">
    <location>
        <begin position="1"/>
        <end position="17"/>
    </location>
</feature>
<feature type="chain" id="PRO_0000268611" description="Uncharacterized lipoprotein YsaB">
    <location>
        <begin position="18"/>
        <end position="99"/>
    </location>
</feature>
<feature type="lipid moiety-binding region" description="N-palmitoyl cysteine" evidence="1">
    <location>
        <position position="18"/>
    </location>
</feature>
<feature type="lipid moiety-binding region" description="S-diacylglycerol cysteine" evidence="1">
    <location>
        <position position="18"/>
    </location>
</feature>
<dbReference type="EMBL" id="AE014075">
    <property type="protein sequence ID" value="AAN82816.1"/>
    <property type="molecule type" value="Genomic_DNA"/>
</dbReference>
<dbReference type="RefSeq" id="WP_000980101.1">
    <property type="nucleotide sequence ID" value="NC_004431.1"/>
</dbReference>
<dbReference type="STRING" id="199310.c4380"/>
<dbReference type="KEGG" id="ecc:c4380"/>
<dbReference type="eggNOG" id="ENOG5032T4W">
    <property type="taxonomic scope" value="Bacteria"/>
</dbReference>
<dbReference type="HOGENOM" id="CLU_162515_0_0_6"/>
<dbReference type="BioCyc" id="ECOL199310:C4380-MONOMER"/>
<dbReference type="Proteomes" id="UP000001410">
    <property type="component" value="Chromosome"/>
</dbReference>
<dbReference type="GO" id="GO:0005886">
    <property type="term" value="C:plasma membrane"/>
    <property type="evidence" value="ECO:0007669"/>
    <property type="project" value="UniProtKB-SubCell"/>
</dbReference>
<dbReference type="InterPro" id="IPR025728">
    <property type="entry name" value="YsaB-like"/>
</dbReference>
<dbReference type="Pfam" id="PF13983">
    <property type="entry name" value="YsaB"/>
    <property type="match status" value="1"/>
</dbReference>
<protein>
    <recommendedName>
        <fullName>Uncharacterized lipoprotein YsaB</fullName>
    </recommendedName>
</protein>
<proteinExistence type="inferred from homology"/>
<comment type="subcellular location">
    <subcellularLocation>
        <location evidence="2">Cell membrane</location>
        <topology evidence="2">Lipid-anchor</topology>
    </subcellularLocation>
</comment>
<sequence length="99" mass="11260">MMMNAFFPAMALIVLVGCSTPPPVQKAQRVKGDPLRSLNMEALCKDQAGKRYNTGEQKIDVTAFEQFQGSYEMRGYTFRKEQFVCSFDADGHFLHLSMR</sequence>
<evidence type="ECO:0000255" key="1"/>
<evidence type="ECO:0000305" key="2"/>
<reference key="1">
    <citation type="journal article" date="2002" name="Proc. Natl. Acad. Sci. U.S.A.">
        <title>Extensive mosaic structure revealed by the complete genome sequence of uropathogenic Escherichia coli.</title>
        <authorList>
            <person name="Welch R.A."/>
            <person name="Burland V."/>
            <person name="Plunkett G. III"/>
            <person name="Redford P."/>
            <person name="Roesch P."/>
            <person name="Rasko D."/>
            <person name="Buckles E.L."/>
            <person name="Liou S.-R."/>
            <person name="Boutin A."/>
            <person name="Hackett J."/>
            <person name="Stroud D."/>
            <person name="Mayhew G.F."/>
            <person name="Rose D.J."/>
            <person name="Zhou S."/>
            <person name="Schwartz D.C."/>
            <person name="Perna N.T."/>
            <person name="Mobley H.L.T."/>
            <person name="Donnenberg M.S."/>
            <person name="Blattner F.R."/>
        </authorList>
    </citation>
    <scope>NUCLEOTIDE SEQUENCE [LARGE SCALE GENOMIC DNA]</scope>
    <source>
        <strain>CFT073 / ATCC 700928 / UPEC</strain>
    </source>
</reference>
<name>YSAB_ECOL6</name>
<organism>
    <name type="scientific">Escherichia coli O6:H1 (strain CFT073 / ATCC 700928 / UPEC)</name>
    <dbReference type="NCBI Taxonomy" id="199310"/>
    <lineage>
        <taxon>Bacteria</taxon>
        <taxon>Pseudomonadati</taxon>
        <taxon>Pseudomonadota</taxon>
        <taxon>Gammaproteobacteria</taxon>
        <taxon>Enterobacterales</taxon>
        <taxon>Enterobacteriaceae</taxon>
        <taxon>Escherichia</taxon>
    </lineage>
</organism>